<accession>B1JXG4</accession>
<dbReference type="EC" id="1.3.1.98" evidence="1"/>
<dbReference type="EMBL" id="CP000958">
    <property type="protein sequence ID" value="ACA91739.1"/>
    <property type="molecule type" value="Genomic_DNA"/>
</dbReference>
<dbReference type="RefSeq" id="WP_012329095.1">
    <property type="nucleotide sequence ID" value="NC_010508.1"/>
</dbReference>
<dbReference type="SMR" id="B1JXG4"/>
<dbReference type="GeneID" id="83049366"/>
<dbReference type="KEGG" id="bcm:Bcenmc03_2578"/>
<dbReference type="HOGENOM" id="CLU_035304_0_0_4"/>
<dbReference type="UniPathway" id="UPA00219"/>
<dbReference type="Proteomes" id="UP000002169">
    <property type="component" value="Chromosome 1"/>
</dbReference>
<dbReference type="GO" id="GO:0005829">
    <property type="term" value="C:cytosol"/>
    <property type="evidence" value="ECO:0007669"/>
    <property type="project" value="TreeGrafter"/>
</dbReference>
<dbReference type="GO" id="GO:0071949">
    <property type="term" value="F:FAD binding"/>
    <property type="evidence" value="ECO:0007669"/>
    <property type="project" value="InterPro"/>
</dbReference>
<dbReference type="GO" id="GO:0008762">
    <property type="term" value="F:UDP-N-acetylmuramate dehydrogenase activity"/>
    <property type="evidence" value="ECO:0007669"/>
    <property type="project" value="UniProtKB-UniRule"/>
</dbReference>
<dbReference type="GO" id="GO:0051301">
    <property type="term" value="P:cell division"/>
    <property type="evidence" value="ECO:0007669"/>
    <property type="project" value="UniProtKB-KW"/>
</dbReference>
<dbReference type="GO" id="GO:0071555">
    <property type="term" value="P:cell wall organization"/>
    <property type="evidence" value="ECO:0007669"/>
    <property type="project" value="UniProtKB-KW"/>
</dbReference>
<dbReference type="GO" id="GO:0009252">
    <property type="term" value="P:peptidoglycan biosynthetic process"/>
    <property type="evidence" value="ECO:0007669"/>
    <property type="project" value="UniProtKB-UniRule"/>
</dbReference>
<dbReference type="GO" id="GO:0008360">
    <property type="term" value="P:regulation of cell shape"/>
    <property type="evidence" value="ECO:0007669"/>
    <property type="project" value="UniProtKB-KW"/>
</dbReference>
<dbReference type="Gene3D" id="3.30.465.10">
    <property type="match status" value="1"/>
</dbReference>
<dbReference type="Gene3D" id="3.90.78.10">
    <property type="entry name" value="UDP-N-acetylenolpyruvoylglucosamine reductase, C-terminal domain"/>
    <property type="match status" value="1"/>
</dbReference>
<dbReference type="Gene3D" id="3.30.43.10">
    <property type="entry name" value="Uridine Diphospho-n-acetylenolpyruvylglucosamine Reductase, domain 2"/>
    <property type="match status" value="1"/>
</dbReference>
<dbReference type="HAMAP" id="MF_00037">
    <property type="entry name" value="MurB"/>
    <property type="match status" value="1"/>
</dbReference>
<dbReference type="InterPro" id="IPR016166">
    <property type="entry name" value="FAD-bd_PCMH"/>
</dbReference>
<dbReference type="InterPro" id="IPR036318">
    <property type="entry name" value="FAD-bd_PCMH-like_sf"/>
</dbReference>
<dbReference type="InterPro" id="IPR016167">
    <property type="entry name" value="FAD-bd_PCMH_sub1"/>
</dbReference>
<dbReference type="InterPro" id="IPR016169">
    <property type="entry name" value="FAD-bd_PCMH_sub2"/>
</dbReference>
<dbReference type="InterPro" id="IPR003170">
    <property type="entry name" value="MurB"/>
</dbReference>
<dbReference type="InterPro" id="IPR011601">
    <property type="entry name" value="MurB_C"/>
</dbReference>
<dbReference type="InterPro" id="IPR036635">
    <property type="entry name" value="MurB_C_sf"/>
</dbReference>
<dbReference type="InterPro" id="IPR006094">
    <property type="entry name" value="Oxid_FAD_bind_N"/>
</dbReference>
<dbReference type="NCBIfam" id="TIGR00179">
    <property type="entry name" value="murB"/>
    <property type="match status" value="1"/>
</dbReference>
<dbReference type="NCBIfam" id="NF000755">
    <property type="entry name" value="PRK00046.1"/>
    <property type="match status" value="1"/>
</dbReference>
<dbReference type="NCBIfam" id="NF010478">
    <property type="entry name" value="PRK13903.1"/>
    <property type="match status" value="1"/>
</dbReference>
<dbReference type="PANTHER" id="PTHR21071">
    <property type="entry name" value="UDP-N-ACETYLENOLPYRUVOYLGLUCOSAMINE REDUCTASE"/>
    <property type="match status" value="1"/>
</dbReference>
<dbReference type="PANTHER" id="PTHR21071:SF4">
    <property type="entry name" value="UDP-N-ACETYLENOLPYRUVOYLGLUCOSAMINE REDUCTASE"/>
    <property type="match status" value="1"/>
</dbReference>
<dbReference type="Pfam" id="PF01565">
    <property type="entry name" value="FAD_binding_4"/>
    <property type="match status" value="1"/>
</dbReference>
<dbReference type="Pfam" id="PF02873">
    <property type="entry name" value="MurB_C"/>
    <property type="match status" value="1"/>
</dbReference>
<dbReference type="SUPFAM" id="SSF56176">
    <property type="entry name" value="FAD-binding/transporter-associated domain-like"/>
    <property type="match status" value="1"/>
</dbReference>
<dbReference type="SUPFAM" id="SSF56194">
    <property type="entry name" value="Uridine diphospho-N-Acetylenolpyruvylglucosamine reductase, MurB, C-terminal domain"/>
    <property type="match status" value="1"/>
</dbReference>
<dbReference type="PROSITE" id="PS51387">
    <property type="entry name" value="FAD_PCMH"/>
    <property type="match status" value="1"/>
</dbReference>
<protein>
    <recommendedName>
        <fullName evidence="1">UDP-N-acetylenolpyruvoylglucosamine reductase</fullName>
        <ecNumber evidence="1">1.3.1.98</ecNumber>
    </recommendedName>
    <alternativeName>
        <fullName evidence="1">UDP-N-acetylmuramate dehydrogenase</fullName>
    </alternativeName>
</protein>
<sequence>MPMPPDDSALSLLPDHPLAAHNTFGIAARARFAARITQAAQFEALHRDPRLANLPQLVLGGGSNIVFTRDFDGVVLLDEIAGRRVVREDDDAWYVEAGGGENWHAFVAWTLEHGMPGLENLALIPGTVGAAPIQNIGAYGLEMKAYFDSLVAVELATGRRERFDAARCAFGYRDSFFKREGRGRFAIVAVTFRLPKQWMPRLGYADVTRELDARGITPEAATPRDVFDAVVAIRRAKLPDPLVLGNAGSFFKNPVIDAAQFDALRARAPEVVSYPQPDGQVKLAAGWLIDRCGWKGRALGAAAVHDRQALVLVNRGGATGADVLALARAIQADVRAQFGVELEAEPVCL</sequence>
<keyword id="KW-0131">Cell cycle</keyword>
<keyword id="KW-0132">Cell division</keyword>
<keyword id="KW-0133">Cell shape</keyword>
<keyword id="KW-0961">Cell wall biogenesis/degradation</keyword>
<keyword id="KW-0963">Cytoplasm</keyword>
<keyword id="KW-0274">FAD</keyword>
<keyword id="KW-0285">Flavoprotein</keyword>
<keyword id="KW-0521">NADP</keyword>
<keyword id="KW-0560">Oxidoreductase</keyword>
<keyword id="KW-0573">Peptidoglycan synthesis</keyword>
<comment type="function">
    <text evidence="1">Cell wall formation.</text>
</comment>
<comment type="catalytic activity">
    <reaction evidence="1">
        <text>UDP-N-acetyl-alpha-D-muramate + NADP(+) = UDP-N-acetyl-3-O-(1-carboxyvinyl)-alpha-D-glucosamine + NADPH + H(+)</text>
        <dbReference type="Rhea" id="RHEA:12248"/>
        <dbReference type="ChEBI" id="CHEBI:15378"/>
        <dbReference type="ChEBI" id="CHEBI:57783"/>
        <dbReference type="ChEBI" id="CHEBI:58349"/>
        <dbReference type="ChEBI" id="CHEBI:68483"/>
        <dbReference type="ChEBI" id="CHEBI:70757"/>
        <dbReference type="EC" id="1.3.1.98"/>
    </reaction>
</comment>
<comment type="cofactor">
    <cofactor evidence="1">
        <name>FAD</name>
        <dbReference type="ChEBI" id="CHEBI:57692"/>
    </cofactor>
</comment>
<comment type="pathway">
    <text evidence="1">Cell wall biogenesis; peptidoglycan biosynthesis.</text>
</comment>
<comment type="subcellular location">
    <subcellularLocation>
        <location evidence="1">Cytoplasm</location>
    </subcellularLocation>
</comment>
<comment type="similarity">
    <text evidence="1">Belongs to the MurB family.</text>
</comment>
<organism>
    <name type="scientific">Burkholderia orbicola (strain MC0-3)</name>
    <dbReference type="NCBI Taxonomy" id="406425"/>
    <lineage>
        <taxon>Bacteria</taxon>
        <taxon>Pseudomonadati</taxon>
        <taxon>Pseudomonadota</taxon>
        <taxon>Betaproteobacteria</taxon>
        <taxon>Burkholderiales</taxon>
        <taxon>Burkholderiaceae</taxon>
        <taxon>Burkholderia</taxon>
        <taxon>Burkholderia cepacia complex</taxon>
        <taxon>Burkholderia orbicola</taxon>
    </lineage>
</organism>
<evidence type="ECO:0000255" key="1">
    <source>
        <dbReference type="HAMAP-Rule" id="MF_00037"/>
    </source>
</evidence>
<feature type="chain" id="PRO_1000191403" description="UDP-N-acetylenolpyruvoylglucosamine reductase">
    <location>
        <begin position="1"/>
        <end position="349"/>
    </location>
</feature>
<feature type="domain" description="FAD-binding PCMH-type" evidence="1">
    <location>
        <begin position="25"/>
        <end position="197"/>
    </location>
</feature>
<feature type="active site" evidence="1">
    <location>
        <position position="173"/>
    </location>
</feature>
<feature type="active site" description="Proton donor" evidence="1">
    <location>
        <position position="249"/>
    </location>
</feature>
<feature type="active site" evidence="1">
    <location>
        <position position="345"/>
    </location>
</feature>
<reference key="1">
    <citation type="submission" date="2008-02" db="EMBL/GenBank/DDBJ databases">
        <title>Complete sequence of chromosome 1 of Burkholderia cenocepacia MC0-3.</title>
        <authorList>
            <person name="Copeland A."/>
            <person name="Lucas S."/>
            <person name="Lapidus A."/>
            <person name="Barry K."/>
            <person name="Bruce D."/>
            <person name="Goodwin L."/>
            <person name="Glavina del Rio T."/>
            <person name="Dalin E."/>
            <person name="Tice H."/>
            <person name="Pitluck S."/>
            <person name="Chain P."/>
            <person name="Malfatti S."/>
            <person name="Shin M."/>
            <person name="Vergez L."/>
            <person name="Schmutz J."/>
            <person name="Larimer F."/>
            <person name="Land M."/>
            <person name="Hauser L."/>
            <person name="Kyrpides N."/>
            <person name="Mikhailova N."/>
            <person name="Tiedje J."/>
            <person name="Richardson P."/>
        </authorList>
    </citation>
    <scope>NUCLEOTIDE SEQUENCE [LARGE SCALE GENOMIC DNA]</scope>
    <source>
        <strain>MC0-3</strain>
    </source>
</reference>
<name>MURB_BURO0</name>
<proteinExistence type="inferred from homology"/>
<gene>
    <name evidence="1" type="primary">murB</name>
    <name type="ordered locus">Bcenmc03_2578</name>
</gene>